<proteinExistence type="inferred from homology"/>
<protein>
    <recommendedName>
        <fullName evidence="1">Proline--tRNA ligase</fullName>
        <ecNumber evidence="1">6.1.1.15</ecNumber>
    </recommendedName>
    <alternativeName>
        <fullName evidence="1">Prolyl-tRNA synthetase</fullName>
        <shortName evidence="1">ProRS</shortName>
    </alternativeName>
</protein>
<gene>
    <name evidence="1" type="primary">proS</name>
    <name type="ordered locus">BPP3787</name>
</gene>
<comment type="function">
    <text evidence="1">Catalyzes the attachment of proline to tRNA(Pro) in a two-step reaction: proline is first activated by ATP to form Pro-AMP and then transferred to the acceptor end of tRNA(Pro). As ProRS can inadvertently accommodate and process non-cognate amino acids such as alanine and cysteine, to avoid such errors it has two additional distinct editing activities against alanine. One activity is designated as 'pretransfer' editing and involves the tRNA(Pro)-independent hydrolysis of activated Ala-AMP. The other activity is designated 'posttransfer' editing and involves deacylation of mischarged Ala-tRNA(Pro). The misacylated Cys-tRNA(Pro) is not edited by ProRS.</text>
</comment>
<comment type="catalytic activity">
    <reaction evidence="1">
        <text>tRNA(Pro) + L-proline + ATP = L-prolyl-tRNA(Pro) + AMP + diphosphate</text>
        <dbReference type="Rhea" id="RHEA:14305"/>
        <dbReference type="Rhea" id="RHEA-COMP:9700"/>
        <dbReference type="Rhea" id="RHEA-COMP:9702"/>
        <dbReference type="ChEBI" id="CHEBI:30616"/>
        <dbReference type="ChEBI" id="CHEBI:33019"/>
        <dbReference type="ChEBI" id="CHEBI:60039"/>
        <dbReference type="ChEBI" id="CHEBI:78442"/>
        <dbReference type="ChEBI" id="CHEBI:78532"/>
        <dbReference type="ChEBI" id="CHEBI:456215"/>
        <dbReference type="EC" id="6.1.1.15"/>
    </reaction>
</comment>
<comment type="subunit">
    <text evidence="1">Homodimer.</text>
</comment>
<comment type="subcellular location">
    <subcellularLocation>
        <location evidence="1">Cytoplasm</location>
    </subcellularLocation>
</comment>
<comment type="domain">
    <text evidence="1">Consists of three domains: the N-terminal catalytic domain, the editing domain and the C-terminal anticodon-binding domain.</text>
</comment>
<comment type="similarity">
    <text evidence="1">Belongs to the class-II aminoacyl-tRNA synthetase family. ProS type 1 subfamily.</text>
</comment>
<feature type="chain" id="PRO_0000248656" description="Proline--tRNA ligase">
    <location>
        <begin position="1"/>
        <end position="576"/>
    </location>
</feature>
<sequence length="576" mass="63685">MRASKYHLNTLKEAPAEAEIASHQLMTRAGMIRKLAGGIYTYMPLGLKVIRKIEGIVREEMNAAGAIELLMPVVQPAELWMESGRWEQYGAELLRIKDRHQRDFVLQPTSEEVITDIARNEIQSYRQLPLNFYHIQTKFRDERRPRFGLMRGREFTMKDAYSFDRDEAGAQRSYDIMYAAYQRIFQRLSLEFRAVAADTGSIGGSRSHEFQVIADTGEDLIVYNPESDYAANIELAEAPALLAARAAPAQDLEAVPTPGAAKCEDVAKLLGLPLARTIKSIVLAVDQPEGPAQVWLLLLRGDHELNEIKAGKLPGLAGFRFATETEIVDHFGCKPGYLGPIKTARPVHVVADRTVANMADFVCGANREDYHYQGANWGRDLPEPELVADLRNVVEGDPSPDGKGALSIQRGIEVGHVFFLGTKYSEALKATFLDDNGKPAVLQMGCYGIGVTRIVGAAIEQNHDARGIIWPRAIAPYEVVICPVGWGKSETVRDTALALYEALRARGVDVMLDDRDSRPGVMFAEWELIGVPLRVTVGERGLNEGVVELQARREAEAAKVPVDQALAQTLAKLDLL</sequence>
<dbReference type="EC" id="6.1.1.15" evidence="1"/>
<dbReference type="EMBL" id="BX640434">
    <property type="protein sequence ID" value="CAE39070.1"/>
    <property type="molecule type" value="Genomic_DNA"/>
</dbReference>
<dbReference type="RefSeq" id="WP_010929244.1">
    <property type="nucleotide sequence ID" value="NC_002928.3"/>
</dbReference>
<dbReference type="SMR" id="Q7W481"/>
<dbReference type="GeneID" id="93205583"/>
<dbReference type="KEGG" id="bpa:BPP3787"/>
<dbReference type="HOGENOM" id="CLU_016739_0_0_4"/>
<dbReference type="Proteomes" id="UP000001421">
    <property type="component" value="Chromosome"/>
</dbReference>
<dbReference type="GO" id="GO:0005829">
    <property type="term" value="C:cytosol"/>
    <property type="evidence" value="ECO:0007669"/>
    <property type="project" value="TreeGrafter"/>
</dbReference>
<dbReference type="GO" id="GO:0002161">
    <property type="term" value="F:aminoacyl-tRNA deacylase activity"/>
    <property type="evidence" value="ECO:0007669"/>
    <property type="project" value="InterPro"/>
</dbReference>
<dbReference type="GO" id="GO:0005524">
    <property type="term" value="F:ATP binding"/>
    <property type="evidence" value="ECO:0007669"/>
    <property type="project" value="UniProtKB-UniRule"/>
</dbReference>
<dbReference type="GO" id="GO:0004827">
    <property type="term" value="F:proline-tRNA ligase activity"/>
    <property type="evidence" value="ECO:0007669"/>
    <property type="project" value="UniProtKB-UniRule"/>
</dbReference>
<dbReference type="GO" id="GO:0006433">
    <property type="term" value="P:prolyl-tRNA aminoacylation"/>
    <property type="evidence" value="ECO:0007669"/>
    <property type="project" value="UniProtKB-UniRule"/>
</dbReference>
<dbReference type="CDD" id="cd04334">
    <property type="entry name" value="ProRS-INS"/>
    <property type="match status" value="1"/>
</dbReference>
<dbReference type="CDD" id="cd00861">
    <property type="entry name" value="ProRS_anticodon_short"/>
    <property type="match status" value="1"/>
</dbReference>
<dbReference type="CDD" id="cd00779">
    <property type="entry name" value="ProRS_core_prok"/>
    <property type="match status" value="1"/>
</dbReference>
<dbReference type="FunFam" id="3.30.930.10:FF:000012">
    <property type="entry name" value="Proline--tRNA ligase"/>
    <property type="match status" value="1"/>
</dbReference>
<dbReference type="FunFam" id="3.30.930.10:FF:000097">
    <property type="entry name" value="Proline--tRNA ligase"/>
    <property type="match status" value="1"/>
</dbReference>
<dbReference type="Gene3D" id="3.40.50.800">
    <property type="entry name" value="Anticodon-binding domain"/>
    <property type="match status" value="1"/>
</dbReference>
<dbReference type="Gene3D" id="3.30.930.10">
    <property type="entry name" value="Bira Bifunctional Protein, Domain 2"/>
    <property type="match status" value="2"/>
</dbReference>
<dbReference type="Gene3D" id="3.90.960.10">
    <property type="entry name" value="YbaK/aminoacyl-tRNA synthetase-associated domain"/>
    <property type="match status" value="1"/>
</dbReference>
<dbReference type="HAMAP" id="MF_01569">
    <property type="entry name" value="Pro_tRNA_synth_type1"/>
    <property type="match status" value="1"/>
</dbReference>
<dbReference type="InterPro" id="IPR002314">
    <property type="entry name" value="aa-tRNA-synt_IIb"/>
</dbReference>
<dbReference type="InterPro" id="IPR006195">
    <property type="entry name" value="aa-tRNA-synth_II"/>
</dbReference>
<dbReference type="InterPro" id="IPR045864">
    <property type="entry name" value="aa-tRNA-synth_II/BPL/LPL"/>
</dbReference>
<dbReference type="InterPro" id="IPR004154">
    <property type="entry name" value="Anticodon-bd"/>
</dbReference>
<dbReference type="InterPro" id="IPR036621">
    <property type="entry name" value="Anticodon-bd_dom_sf"/>
</dbReference>
<dbReference type="InterPro" id="IPR002316">
    <property type="entry name" value="Pro-tRNA-ligase_IIa"/>
</dbReference>
<dbReference type="InterPro" id="IPR004500">
    <property type="entry name" value="Pro-tRNA-synth_IIa_bac-type"/>
</dbReference>
<dbReference type="InterPro" id="IPR023717">
    <property type="entry name" value="Pro-tRNA-Synthase_IIa_type1"/>
</dbReference>
<dbReference type="InterPro" id="IPR050062">
    <property type="entry name" value="Pro-tRNA_synthetase"/>
</dbReference>
<dbReference type="InterPro" id="IPR044140">
    <property type="entry name" value="ProRS_anticodon_short"/>
</dbReference>
<dbReference type="InterPro" id="IPR033730">
    <property type="entry name" value="ProRS_core_prok"/>
</dbReference>
<dbReference type="InterPro" id="IPR036754">
    <property type="entry name" value="YbaK/aa-tRNA-synt-asso_dom_sf"/>
</dbReference>
<dbReference type="InterPro" id="IPR007214">
    <property type="entry name" value="YbaK/aa-tRNA-synth-assoc-dom"/>
</dbReference>
<dbReference type="NCBIfam" id="NF006625">
    <property type="entry name" value="PRK09194.1"/>
    <property type="match status" value="1"/>
</dbReference>
<dbReference type="NCBIfam" id="TIGR00409">
    <property type="entry name" value="proS_fam_II"/>
    <property type="match status" value="1"/>
</dbReference>
<dbReference type="PANTHER" id="PTHR42753">
    <property type="entry name" value="MITOCHONDRIAL RIBOSOME PROTEIN L39/PROLYL-TRNA LIGASE FAMILY MEMBER"/>
    <property type="match status" value="1"/>
</dbReference>
<dbReference type="PANTHER" id="PTHR42753:SF2">
    <property type="entry name" value="PROLINE--TRNA LIGASE"/>
    <property type="match status" value="1"/>
</dbReference>
<dbReference type="Pfam" id="PF03129">
    <property type="entry name" value="HGTP_anticodon"/>
    <property type="match status" value="1"/>
</dbReference>
<dbReference type="Pfam" id="PF00587">
    <property type="entry name" value="tRNA-synt_2b"/>
    <property type="match status" value="1"/>
</dbReference>
<dbReference type="Pfam" id="PF04073">
    <property type="entry name" value="tRNA_edit"/>
    <property type="match status" value="1"/>
</dbReference>
<dbReference type="PIRSF" id="PIRSF001535">
    <property type="entry name" value="ProRS_1"/>
    <property type="match status" value="1"/>
</dbReference>
<dbReference type="PRINTS" id="PR01046">
    <property type="entry name" value="TRNASYNTHPRO"/>
</dbReference>
<dbReference type="SUPFAM" id="SSF52954">
    <property type="entry name" value="Class II aaRS ABD-related"/>
    <property type="match status" value="1"/>
</dbReference>
<dbReference type="SUPFAM" id="SSF55681">
    <property type="entry name" value="Class II aaRS and biotin synthetases"/>
    <property type="match status" value="1"/>
</dbReference>
<dbReference type="SUPFAM" id="SSF55826">
    <property type="entry name" value="YbaK/ProRS associated domain"/>
    <property type="match status" value="1"/>
</dbReference>
<dbReference type="PROSITE" id="PS50862">
    <property type="entry name" value="AA_TRNA_LIGASE_II"/>
    <property type="match status" value="1"/>
</dbReference>
<reference key="1">
    <citation type="journal article" date="2003" name="Nat. Genet.">
        <title>Comparative analysis of the genome sequences of Bordetella pertussis, Bordetella parapertussis and Bordetella bronchiseptica.</title>
        <authorList>
            <person name="Parkhill J."/>
            <person name="Sebaihia M."/>
            <person name="Preston A."/>
            <person name="Murphy L.D."/>
            <person name="Thomson N.R."/>
            <person name="Harris D.E."/>
            <person name="Holden M.T.G."/>
            <person name="Churcher C.M."/>
            <person name="Bentley S.D."/>
            <person name="Mungall K.L."/>
            <person name="Cerdeno-Tarraga A.-M."/>
            <person name="Temple L."/>
            <person name="James K.D."/>
            <person name="Harris B."/>
            <person name="Quail M.A."/>
            <person name="Achtman M."/>
            <person name="Atkin R."/>
            <person name="Baker S."/>
            <person name="Basham D."/>
            <person name="Bason N."/>
            <person name="Cherevach I."/>
            <person name="Chillingworth T."/>
            <person name="Collins M."/>
            <person name="Cronin A."/>
            <person name="Davis P."/>
            <person name="Doggett J."/>
            <person name="Feltwell T."/>
            <person name="Goble A."/>
            <person name="Hamlin N."/>
            <person name="Hauser H."/>
            <person name="Holroyd S."/>
            <person name="Jagels K."/>
            <person name="Leather S."/>
            <person name="Moule S."/>
            <person name="Norberczak H."/>
            <person name="O'Neil S."/>
            <person name="Ormond D."/>
            <person name="Price C."/>
            <person name="Rabbinowitsch E."/>
            <person name="Rutter S."/>
            <person name="Sanders M."/>
            <person name="Saunders D."/>
            <person name="Seeger K."/>
            <person name="Sharp S."/>
            <person name="Simmonds M."/>
            <person name="Skelton J."/>
            <person name="Squares R."/>
            <person name="Squares S."/>
            <person name="Stevens K."/>
            <person name="Unwin L."/>
            <person name="Whitehead S."/>
            <person name="Barrell B.G."/>
            <person name="Maskell D.J."/>
        </authorList>
    </citation>
    <scope>NUCLEOTIDE SEQUENCE [LARGE SCALE GENOMIC DNA]</scope>
    <source>
        <strain>12822 / ATCC BAA-587 / NCTC 13253</strain>
    </source>
</reference>
<evidence type="ECO:0000255" key="1">
    <source>
        <dbReference type="HAMAP-Rule" id="MF_01569"/>
    </source>
</evidence>
<accession>Q7W481</accession>
<keyword id="KW-0030">Aminoacyl-tRNA synthetase</keyword>
<keyword id="KW-0067">ATP-binding</keyword>
<keyword id="KW-0963">Cytoplasm</keyword>
<keyword id="KW-0436">Ligase</keyword>
<keyword id="KW-0547">Nucleotide-binding</keyword>
<keyword id="KW-0648">Protein biosynthesis</keyword>
<organism>
    <name type="scientific">Bordetella parapertussis (strain 12822 / ATCC BAA-587 / NCTC 13253)</name>
    <dbReference type="NCBI Taxonomy" id="257311"/>
    <lineage>
        <taxon>Bacteria</taxon>
        <taxon>Pseudomonadati</taxon>
        <taxon>Pseudomonadota</taxon>
        <taxon>Betaproteobacteria</taxon>
        <taxon>Burkholderiales</taxon>
        <taxon>Alcaligenaceae</taxon>
        <taxon>Bordetella</taxon>
    </lineage>
</organism>
<name>SYP_BORPA</name>